<feature type="initiator methionine" description="Removed" evidence="1">
    <location>
        <position position="1"/>
    </location>
</feature>
<feature type="chain" id="PRO_0000221667" description="MAPK phosphothreonine lyase">
    <location>
        <begin position="2"/>
        <end position="241"/>
    </location>
</feature>
<feature type="active site" description="Proton donor" evidence="1">
    <location>
        <position position="106"/>
    </location>
</feature>
<feature type="active site" description="Proton acceptor" evidence="1">
    <location>
        <position position="136"/>
    </location>
</feature>
<proteinExistence type="inferred from homology"/>
<protein>
    <recommendedName>
        <fullName>MAPK phosphothreonine lyase</fullName>
        <ecNumber>4.2.3.-</ecNumber>
    </recommendedName>
    <alternativeName>
        <fullName>27.5 kDa virulence protein</fullName>
    </alternativeName>
    <alternativeName>
        <fullName>Secreted effector protein SpvC</fullName>
    </alternativeName>
</protein>
<reference key="1">
    <citation type="journal article" date="1990" name="Nucleic Acids Res.">
        <title>Nucleotide sequence of a gene encoding a 29 kDa polypeptide in mba region of the virulence plasmid, pKDSC50, of Salmonella choleraesuis.</title>
        <authorList>
            <person name="Matsui H."/>
            <person name="Kawahara K."/>
            <person name="Terakado N."/>
            <person name="Danbara H."/>
        </authorList>
    </citation>
    <scope>NUCLEOTIDE SEQUENCE [GENOMIC DNA]</scope>
    <source>
        <strain>RF-1</strain>
        <plasmid>pKDSc50</plasmid>
    </source>
</reference>
<reference key="2">
    <citation type="journal article" date="2001" name="Infect. Immun.">
        <title>Complete DNA sequence and comparative analysis of the 50-kilobase virulence plasmid of Salmonella enterica serovar Choleraesuis.</title>
        <authorList>
            <person name="Haneda T."/>
            <person name="Okada N."/>
            <person name="Nakazawa N."/>
            <person name="Kawakami T."/>
            <person name="Danbara H."/>
        </authorList>
    </citation>
    <scope>NUCLEOTIDE SEQUENCE [GENOMIC DNA]</scope>
    <source>
        <strain>RF-1</strain>
        <plasmid>pKDSc50</plasmid>
    </source>
</reference>
<reference key="3">
    <citation type="journal article" date="2005" name="Nucleic Acids Res.">
        <title>The genome sequence of Salmonella enterica serovar Choleraesuis, a highly invasive and resistant zoonotic pathogen.</title>
        <authorList>
            <person name="Chiu C.-H."/>
            <person name="Tang P."/>
            <person name="Chu C."/>
            <person name="Hu S."/>
            <person name="Bao Q."/>
            <person name="Yu J."/>
            <person name="Chou Y.-Y."/>
            <person name="Wang H.-S."/>
            <person name="Lee Y.-S."/>
        </authorList>
    </citation>
    <scope>NUCLEOTIDE SEQUENCE [LARGE SCALE GENOMIC DNA]</scope>
    <source>
        <strain>SC-B67</strain>
        <plasmid>pSCV50</plasmid>
    </source>
</reference>
<accession>P15805</accession>
<accession>Q5J4C7</accession>
<accession>Q7DIJ7</accession>
<dbReference type="EC" id="4.2.3.-"/>
<dbReference type="EMBL" id="X51453">
    <property type="protein sequence ID" value="CAA35819.1"/>
    <property type="molecule type" value="Genomic_DNA"/>
</dbReference>
<dbReference type="EMBL" id="AB040415">
    <property type="protein sequence ID" value="BAB20512.1"/>
    <property type="molecule type" value="Genomic_DNA"/>
</dbReference>
<dbReference type="EMBL" id="AY509003">
    <property type="protein sequence ID" value="AAS58878.1"/>
    <property type="molecule type" value="Genomic_DNA"/>
</dbReference>
<dbReference type="PIR" id="S08402">
    <property type="entry name" value="S08402"/>
</dbReference>
<dbReference type="RefSeq" id="NP_073229.1">
    <property type="nucleotide sequence ID" value="NC_002638.1"/>
</dbReference>
<dbReference type="RefSeq" id="WP_010904474.1">
    <property type="nucleotide sequence ID" value="NC_006855.1"/>
</dbReference>
<dbReference type="RefSeq" id="YP_001598063.1">
    <property type="nucleotide sequence ID" value="NC_010119.1"/>
</dbReference>
<dbReference type="SMR" id="P15805"/>
<dbReference type="KEGG" id="sec:SCH_V05"/>
<dbReference type="HOGENOM" id="CLU_100525_0_0_6"/>
<dbReference type="Proteomes" id="UP000000538">
    <property type="component" value="Plasmid pSCV50"/>
</dbReference>
<dbReference type="GO" id="GO:0005576">
    <property type="term" value="C:extracellular region"/>
    <property type="evidence" value="ECO:0007669"/>
    <property type="project" value="UniProtKB-SubCell"/>
</dbReference>
<dbReference type="GO" id="GO:0016829">
    <property type="term" value="F:lyase activity"/>
    <property type="evidence" value="ECO:0007669"/>
    <property type="project" value="UniProtKB-KW"/>
</dbReference>
<dbReference type="Gene3D" id="3.30.2430.10">
    <property type="entry name" value="phosphothreonine lyase"/>
    <property type="match status" value="1"/>
</dbReference>
<dbReference type="InterPro" id="IPR003519">
    <property type="entry name" value="OspF/SpvC"/>
</dbReference>
<dbReference type="InterPro" id="IPR038498">
    <property type="entry name" value="OspF/SpvC_sf"/>
</dbReference>
<dbReference type="NCBIfam" id="NF011781">
    <property type="entry name" value="PRK15245.1"/>
    <property type="match status" value="1"/>
</dbReference>
<dbReference type="Pfam" id="PF03536">
    <property type="entry name" value="VRP3"/>
    <property type="match status" value="1"/>
</dbReference>
<dbReference type="PRINTS" id="PR01342">
    <property type="entry name" value="SALVRPPROT"/>
</dbReference>
<name>SPVC_SALCH</name>
<organism>
    <name type="scientific">Salmonella choleraesuis (strain SC-B67)</name>
    <dbReference type="NCBI Taxonomy" id="321314"/>
    <lineage>
        <taxon>Bacteria</taxon>
        <taxon>Pseudomonadati</taxon>
        <taxon>Pseudomonadota</taxon>
        <taxon>Gammaproteobacteria</taxon>
        <taxon>Enterobacterales</taxon>
        <taxon>Enterobacteriaceae</taxon>
        <taxon>Salmonella</taxon>
    </lineage>
</organism>
<evidence type="ECO:0000250" key="1"/>
<evidence type="ECO:0000305" key="2"/>
<keyword id="KW-0456">Lyase</keyword>
<keyword id="KW-0614">Plasmid</keyword>
<keyword id="KW-0964">Secreted</keyword>
<keyword id="KW-0843">Virulence</keyword>
<geneLocation type="plasmid">
    <name>pKDSc50</name>
</geneLocation>
<geneLocation type="plasmid">
    <name>pSCV50</name>
</geneLocation>
<comment type="function">
    <text evidence="1">Secreted effector that irreversibly inactivates host MAP kinases by catalyzing the dephosphorylation of the phosphothreonine residue in the pT-X-pY motif present in MAPKs, via a beta-elimination reaction leading to a dehydrobutyrine residue.</text>
</comment>
<comment type="subcellular location">
    <subcellularLocation>
        <location evidence="1">Secreted</location>
    </subcellularLocation>
</comment>
<comment type="similarity">
    <text evidence="2">Belongs to the phosphothreonine lyase family.</text>
</comment>
<sequence length="241" mass="27668">MPINRPNLNLHIPPLNIVAAYDGAEIPSTNKHLKNNFNSLHNQMRKMPLSHFKEALDVPDYSGMRQSGFFAMSQGFQLNNHGYDVFIHARRESPQSLGKFAGDKFHISVLRDMVPQAFQALSGLLFSEDSPVDKWKVTDMEKVVQQARVSLGAQFTLYIKPDQENSQYSASFLHKTRQFIECLESRLSENGVISGQCPESDVHPENWKYLSYRNELRSGRDGGEMQRQALREEPFYRLMTE</sequence>
<gene>
    <name type="primary">spvC</name>
    <name type="ordered locus">SCH_V05</name>
</gene>